<keyword id="KW-0010">Activator</keyword>
<keyword id="KW-0539">Nucleus</keyword>
<keyword id="KW-1185">Reference proteome</keyword>
<keyword id="KW-0804">Transcription</keyword>
<keyword id="KW-0805">Transcription regulation</keyword>
<comment type="function">
    <text evidence="1">Component of the Mediator complex, a coactivator involved in the regulated transcription of nearly all RNA polymerase II-dependent genes. Mediator functions as a bridge to convey information from gene-specific regulatory proteins to the basal RNA polymerase II transcription machinery. Mediator is recruited to promoters by direct interactions with regulatory proteins and serves as a scaffold for the assembly of a functional preinitiation complex with RNA polymerase II and the general transcription factors (By similarity).</text>
</comment>
<comment type="subunit">
    <text evidence="1">Component of the Mediator complex.</text>
</comment>
<comment type="subcellular location">
    <subcellularLocation>
        <location evidence="1">Nucleus</location>
    </subcellularLocation>
</comment>
<comment type="similarity">
    <text evidence="2">Belongs to the Mediator complex subunit 5 family.</text>
</comment>
<comment type="sequence caution" evidence="2">
    <conflict type="erroneous initiation">
        <sequence resource="EMBL-CDS" id="EAW25465"/>
    </conflict>
</comment>
<proteinExistence type="inferred from homology"/>
<reference key="1">
    <citation type="journal article" date="2008" name="PLoS Genet.">
        <title>Genomic islands in the pathogenic filamentous fungus Aspergillus fumigatus.</title>
        <authorList>
            <person name="Fedorova N.D."/>
            <person name="Khaldi N."/>
            <person name="Joardar V.S."/>
            <person name="Maiti R."/>
            <person name="Amedeo P."/>
            <person name="Anderson M.J."/>
            <person name="Crabtree J."/>
            <person name="Silva J.C."/>
            <person name="Badger J.H."/>
            <person name="Albarraq A."/>
            <person name="Angiuoli S."/>
            <person name="Bussey H."/>
            <person name="Bowyer P."/>
            <person name="Cotty P.J."/>
            <person name="Dyer P.S."/>
            <person name="Egan A."/>
            <person name="Galens K."/>
            <person name="Fraser-Liggett C.M."/>
            <person name="Haas B.J."/>
            <person name="Inman J.M."/>
            <person name="Kent R."/>
            <person name="Lemieux S."/>
            <person name="Malavazi I."/>
            <person name="Orvis J."/>
            <person name="Roemer T."/>
            <person name="Ronning C.M."/>
            <person name="Sundaram J.P."/>
            <person name="Sutton G."/>
            <person name="Turner G."/>
            <person name="Venter J.C."/>
            <person name="White O.R."/>
            <person name="Whitty B.R."/>
            <person name="Youngman P."/>
            <person name="Wolfe K.H."/>
            <person name="Goldman G.H."/>
            <person name="Wortman J.R."/>
            <person name="Jiang B."/>
            <person name="Denning D.W."/>
            <person name="Nierman W.C."/>
        </authorList>
    </citation>
    <scope>NUCLEOTIDE SEQUENCE [LARGE SCALE GENOMIC DNA]</scope>
    <source>
        <strain>ATCC 1020 / DSM 3700 / CBS 544.65 / FGSC A1164 / JCM 1740 / NRRL 181 / WB 181</strain>
    </source>
</reference>
<gene>
    <name type="primary">nut1</name>
    <name type="synonym">med5</name>
    <name type="ORF">NFIA_109590</name>
</gene>
<accession>A1CXW3</accession>
<evidence type="ECO:0000250" key="1"/>
<evidence type="ECO:0000305" key="2"/>
<name>MED5_NEOFI</name>
<dbReference type="EMBL" id="DS027685">
    <property type="protein sequence ID" value="EAW25465.1"/>
    <property type="status" value="ALT_INIT"/>
    <property type="molecule type" value="Genomic_DNA"/>
</dbReference>
<dbReference type="RefSeq" id="XP_001267362.1">
    <property type="nucleotide sequence ID" value="XM_001267361.1"/>
</dbReference>
<dbReference type="STRING" id="331117.A1CXW3"/>
<dbReference type="EnsemblFungi" id="EAW25465">
    <property type="protein sequence ID" value="EAW25465"/>
    <property type="gene ID" value="NFIA_109590"/>
</dbReference>
<dbReference type="GeneID" id="4593457"/>
<dbReference type="KEGG" id="nfi:NFIA_109590"/>
<dbReference type="VEuPathDB" id="FungiDB:NFIA_109590"/>
<dbReference type="eggNOG" id="ENOG502R1HB">
    <property type="taxonomic scope" value="Eukaryota"/>
</dbReference>
<dbReference type="OrthoDB" id="5322661at2759"/>
<dbReference type="Proteomes" id="UP000006702">
    <property type="component" value="Unassembled WGS sequence"/>
</dbReference>
<dbReference type="GO" id="GO:0016592">
    <property type="term" value="C:mediator complex"/>
    <property type="evidence" value="ECO:0007669"/>
    <property type="project" value="InterPro"/>
</dbReference>
<dbReference type="GO" id="GO:0003712">
    <property type="term" value="F:transcription coregulator activity"/>
    <property type="evidence" value="ECO:0007669"/>
    <property type="project" value="InterPro"/>
</dbReference>
<dbReference type="GO" id="GO:0006357">
    <property type="term" value="P:regulation of transcription by RNA polymerase II"/>
    <property type="evidence" value="ECO:0007669"/>
    <property type="project" value="InterPro"/>
</dbReference>
<dbReference type="InterPro" id="IPR014801">
    <property type="entry name" value="Mediator_Med5_fun"/>
</dbReference>
<dbReference type="PANTHER" id="PTHR35784">
    <property type="entry name" value="MEDIATOR OF RNA POLYMERASE II TRANSCRIPTION SUBUNIT 5"/>
    <property type="match status" value="1"/>
</dbReference>
<dbReference type="PANTHER" id="PTHR35784:SF1">
    <property type="entry name" value="MEDIATOR OF RNA POLYMERASE II TRANSCRIPTION SUBUNIT 5"/>
    <property type="match status" value="1"/>
</dbReference>
<dbReference type="Pfam" id="PF08689">
    <property type="entry name" value="Med5"/>
    <property type="match status" value="1"/>
</dbReference>
<protein>
    <recommendedName>
        <fullName>Mediator of RNA polymerase II transcription subunit 5</fullName>
    </recommendedName>
    <alternativeName>
        <fullName>Mediator complex subunit 5</fullName>
    </alternativeName>
</protein>
<feature type="chain" id="PRO_0000302782" description="Mediator of RNA polymerase II transcription subunit 5">
    <location>
        <begin position="1"/>
        <end position="1009"/>
    </location>
</feature>
<organism>
    <name type="scientific">Neosartorya fischeri (strain ATCC 1020 / DSM 3700 / CBS 544.65 / FGSC A1164 / JCM 1740 / NRRL 181 / WB 181)</name>
    <name type="common">Aspergillus fischerianus</name>
    <dbReference type="NCBI Taxonomy" id="331117"/>
    <lineage>
        <taxon>Eukaryota</taxon>
        <taxon>Fungi</taxon>
        <taxon>Dikarya</taxon>
        <taxon>Ascomycota</taxon>
        <taxon>Pezizomycotina</taxon>
        <taxon>Eurotiomycetes</taxon>
        <taxon>Eurotiomycetidae</taxon>
        <taxon>Eurotiales</taxon>
        <taxon>Aspergillaceae</taxon>
        <taxon>Aspergillus</taxon>
        <taxon>Aspergillus subgen. Fumigati</taxon>
    </lineage>
</organism>
<sequence length="1009" mass="111160">MTAPVQWRTFFHQCLIHRIDASEFRNLSKLLFQKCPIAESALLDALLQTRSESRIKWDPLLPLYIDCLCRMGRVRTSTVLTSLLKYSSIHDKPQLPTSEGKDGSKCYTLMTDIRVIQDAMLSVSTGSTPKTNAEAIAIFFAIIDWIHAVASWHNSHFDPGQHSSGMMSSPDVVSLFESLGILLAALSGTGKGLEVLSADSHEGLKVKLGQALSAYLPLCVEVSLPLRNRLDGLQKEFNLYGERAPKSLDVPMMENMNVNALQFEASVMDGPVINSRAGLYVFINAMLVGRPLVDDSMLINYLANRYGGHYEALIEEILTAAFDVLSNGMYRNESSRTMFVFRSFLVNKLPAFFAAMLASTMVSIPMEMCISHALSRLDPNTFPSFSQMFEMQGNTVLSDVRQEFLFACASHKLIPESSIERLLGENPMQTLPVGYNKDELVSQINANPERAEQLINEIESMEGNAGAIIGAITEVMHNLCNQKETMTLKNICNSLSRRPQALDVVLIFRNPKQVLQPLCALLDSWHWDEDQGEYQPVYDEFGSILLLVLAFKYRFDLRPADLGISSNDSFVLRLLERGTCSQKLDALDEKQNKNLGSWIAALFIAEGISEETMSACSPQEFYLLVATLFSQSLEACETGKLEFDTLKGGFEYLLEPFLLPSLIFALTWLGDHIWETELDPSIPLKALQSLVNPSSISGEAREIHRTVLNITARTLEEQLKDVRTRHPSRTDIKPILDSLEPCLSFQLVGSSHRSELESWTTHSGGGLLGGIRSTFQSLVLWSTNPEVSMAPPPYTHRQLIAGVRMLGASRVLPPLIEELKLQTEAGNGPLALDLAATLICAPMAETFSVEQNSHQPVDPNKEALPRCGILTLRDVLALQHENVPKISEKDPLRAEVLVRLYRRVNALLAPPSQVPNLDVNNIIQNMQLGGVGVGVGAGQMELDAAGAADHGVGPDDAENIHRMIDNAAAAAALDSSGTGLDTSIDDVLNAADMAVGNPEFLDLDMEGMF</sequence>